<feature type="chain" id="PRO_0000269381" description="Large ribosomal subunit protein bL21">
    <location>
        <begin position="1"/>
        <end position="103"/>
    </location>
</feature>
<accession>Q3YX55</accession>
<reference key="1">
    <citation type="journal article" date="2005" name="Nucleic Acids Res.">
        <title>Genome dynamics and diversity of Shigella species, the etiologic agents of bacillary dysentery.</title>
        <authorList>
            <person name="Yang F."/>
            <person name="Yang J."/>
            <person name="Zhang X."/>
            <person name="Chen L."/>
            <person name="Jiang Y."/>
            <person name="Yan Y."/>
            <person name="Tang X."/>
            <person name="Wang J."/>
            <person name="Xiong Z."/>
            <person name="Dong J."/>
            <person name="Xue Y."/>
            <person name="Zhu Y."/>
            <person name="Xu X."/>
            <person name="Sun L."/>
            <person name="Chen S."/>
            <person name="Nie H."/>
            <person name="Peng J."/>
            <person name="Xu J."/>
            <person name="Wang Y."/>
            <person name="Yuan Z."/>
            <person name="Wen Y."/>
            <person name="Yao Z."/>
            <person name="Shen Y."/>
            <person name="Qiang B."/>
            <person name="Hou Y."/>
            <person name="Yu J."/>
            <person name="Jin Q."/>
        </authorList>
    </citation>
    <scope>NUCLEOTIDE SEQUENCE [LARGE SCALE GENOMIC DNA]</scope>
    <source>
        <strain>Ss046</strain>
    </source>
</reference>
<comment type="function">
    <text evidence="1">This protein binds to 23S rRNA in the presence of protein L20.</text>
</comment>
<comment type="subunit">
    <text evidence="1">Part of the 50S ribosomal subunit. Contacts protein L20.</text>
</comment>
<comment type="similarity">
    <text evidence="1">Belongs to the bacterial ribosomal protein bL21 family.</text>
</comment>
<evidence type="ECO:0000255" key="1">
    <source>
        <dbReference type="HAMAP-Rule" id="MF_01363"/>
    </source>
</evidence>
<evidence type="ECO:0000305" key="2"/>
<name>RL21_SHISS</name>
<sequence>MYAVFQSGGKQHRVSEGQTVRLEKLDIATGETVEFAEVLMIANGEEVKIGVPFVDGGVIKAEVVAHGRGEKVKIVKFRRRKHYRKQHGHRQWFTDVKITGISA</sequence>
<gene>
    <name evidence="1" type="primary">rplU</name>
    <name type="ordered locus">SSON_3334</name>
</gene>
<dbReference type="EMBL" id="CP000038">
    <property type="protein sequence ID" value="AAZ89907.1"/>
    <property type="molecule type" value="Genomic_DNA"/>
</dbReference>
<dbReference type="RefSeq" id="WP_000271400.1">
    <property type="nucleotide sequence ID" value="NC_007384.1"/>
</dbReference>
<dbReference type="SMR" id="Q3YX55"/>
<dbReference type="KEGG" id="ssn:SSON_3334"/>
<dbReference type="HOGENOM" id="CLU_061463_3_3_6"/>
<dbReference type="Proteomes" id="UP000002529">
    <property type="component" value="Chromosome"/>
</dbReference>
<dbReference type="GO" id="GO:0005737">
    <property type="term" value="C:cytoplasm"/>
    <property type="evidence" value="ECO:0007669"/>
    <property type="project" value="UniProtKB-ARBA"/>
</dbReference>
<dbReference type="GO" id="GO:1990904">
    <property type="term" value="C:ribonucleoprotein complex"/>
    <property type="evidence" value="ECO:0007669"/>
    <property type="project" value="UniProtKB-KW"/>
</dbReference>
<dbReference type="GO" id="GO:0005840">
    <property type="term" value="C:ribosome"/>
    <property type="evidence" value="ECO:0007669"/>
    <property type="project" value="UniProtKB-KW"/>
</dbReference>
<dbReference type="GO" id="GO:0019843">
    <property type="term" value="F:rRNA binding"/>
    <property type="evidence" value="ECO:0007669"/>
    <property type="project" value="UniProtKB-UniRule"/>
</dbReference>
<dbReference type="GO" id="GO:0003735">
    <property type="term" value="F:structural constituent of ribosome"/>
    <property type="evidence" value="ECO:0007669"/>
    <property type="project" value="InterPro"/>
</dbReference>
<dbReference type="GO" id="GO:0006412">
    <property type="term" value="P:translation"/>
    <property type="evidence" value="ECO:0007669"/>
    <property type="project" value="UniProtKB-UniRule"/>
</dbReference>
<dbReference type="HAMAP" id="MF_01363">
    <property type="entry name" value="Ribosomal_bL21"/>
    <property type="match status" value="1"/>
</dbReference>
<dbReference type="InterPro" id="IPR028909">
    <property type="entry name" value="bL21-like"/>
</dbReference>
<dbReference type="InterPro" id="IPR036164">
    <property type="entry name" value="bL21-like_sf"/>
</dbReference>
<dbReference type="InterPro" id="IPR001787">
    <property type="entry name" value="Ribosomal_bL21"/>
</dbReference>
<dbReference type="InterPro" id="IPR018258">
    <property type="entry name" value="Ribosomal_bL21_CS"/>
</dbReference>
<dbReference type="NCBIfam" id="TIGR00061">
    <property type="entry name" value="L21"/>
    <property type="match status" value="1"/>
</dbReference>
<dbReference type="PANTHER" id="PTHR21349">
    <property type="entry name" value="50S RIBOSOMAL PROTEIN L21"/>
    <property type="match status" value="1"/>
</dbReference>
<dbReference type="PANTHER" id="PTHR21349:SF0">
    <property type="entry name" value="LARGE RIBOSOMAL SUBUNIT PROTEIN BL21M"/>
    <property type="match status" value="1"/>
</dbReference>
<dbReference type="Pfam" id="PF00829">
    <property type="entry name" value="Ribosomal_L21p"/>
    <property type="match status" value="1"/>
</dbReference>
<dbReference type="SUPFAM" id="SSF141091">
    <property type="entry name" value="L21p-like"/>
    <property type="match status" value="1"/>
</dbReference>
<dbReference type="PROSITE" id="PS01169">
    <property type="entry name" value="RIBOSOMAL_L21"/>
    <property type="match status" value="1"/>
</dbReference>
<protein>
    <recommendedName>
        <fullName evidence="1">Large ribosomal subunit protein bL21</fullName>
    </recommendedName>
    <alternativeName>
        <fullName evidence="2">50S ribosomal protein L21</fullName>
    </alternativeName>
</protein>
<organism>
    <name type="scientific">Shigella sonnei (strain Ss046)</name>
    <dbReference type="NCBI Taxonomy" id="300269"/>
    <lineage>
        <taxon>Bacteria</taxon>
        <taxon>Pseudomonadati</taxon>
        <taxon>Pseudomonadota</taxon>
        <taxon>Gammaproteobacteria</taxon>
        <taxon>Enterobacterales</taxon>
        <taxon>Enterobacteriaceae</taxon>
        <taxon>Shigella</taxon>
    </lineage>
</organism>
<proteinExistence type="inferred from homology"/>
<keyword id="KW-1185">Reference proteome</keyword>
<keyword id="KW-0687">Ribonucleoprotein</keyword>
<keyword id="KW-0689">Ribosomal protein</keyword>
<keyword id="KW-0694">RNA-binding</keyword>
<keyword id="KW-0699">rRNA-binding</keyword>